<accession>Q4WUG7</accession>
<dbReference type="EMBL" id="AAHF01000003">
    <property type="protein sequence ID" value="EAL91759.1"/>
    <property type="molecule type" value="Genomic_DNA"/>
</dbReference>
<dbReference type="RefSeq" id="XP_753797.1">
    <property type="nucleotide sequence ID" value="XM_748704.1"/>
</dbReference>
<dbReference type="SMR" id="Q4WUG7"/>
<dbReference type="STRING" id="330879.Q4WUG7"/>
<dbReference type="EnsemblFungi" id="EAL91759">
    <property type="protein sequence ID" value="EAL91759"/>
    <property type="gene ID" value="AFUA_5G08390"/>
</dbReference>
<dbReference type="GeneID" id="3511407"/>
<dbReference type="KEGG" id="afm:AFUA_5G08390"/>
<dbReference type="eggNOG" id="KOG0519">
    <property type="taxonomic scope" value="Eukaryota"/>
</dbReference>
<dbReference type="HOGENOM" id="CLU_008307_1_1_1"/>
<dbReference type="InParanoid" id="Q4WUG7"/>
<dbReference type="OMA" id="YHHSEPG"/>
<dbReference type="OrthoDB" id="21225at2759"/>
<dbReference type="PHI-base" id="PHI:123497"/>
<dbReference type="Proteomes" id="UP000002530">
    <property type="component" value="Chromosome 5"/>
</dbReference>
<dbReference type="GO" id="GO:0005737">
    <property type="term" value="C:cytoplasm"/>
    <property type="evidence" value="ECO:0007669"/>
    <property type="project" value="UniProtKB-SubCell"/>
</dbReference>
<dbReference type="GO" id="GO:0000156">
    <property type="term" value="F:phosphorelay response regulator activity"/>
    <property type="evidence" value="ECO:0000318"/>
    <property type="project" value="GO_Central"/>
</dbReference>
<dbReference type="GO" id="GO:0030295">
    <property type="term" value="F:protein kinase activator activity"/>
    <property type="evidence" value="ECO:0000318"/>
    <property type="project" value="GO_Central"/>
</dbReference>
<dbReference type="GO" id="GO:0007234">
    <property type="term" value="P:osmosensory signaling via phosphorelay pathway"/>
    <property type="evidence" value="ECO:0000318"/>
    <property type="project" value="GO_Central"/>
</dbReference>
<dbReference type="CDD" id="cd17546">
    <property type="entry name" value="REC_hyHK_CKI1_RcsC-like"/>
    <property type="match status" value="1"/>
</dbReference>
<dbReference type="FunFam" id="3.40.50.2300:FF:000146">
    <property type="entry name" value="Putative two-component response regulator SSK1p"/>
    <property type="match status" value="1"/>
</dbReference>
<dbReference type="Gene3D" id="3.40.50.2300">
    <property type="match status" value="1"/>
</dbReference>
<dbReference type="InterPro" id="IPR011006">
    <property type="entry name" value="CheY-like_superfamily"/>
</dbReference>
<dbReference type="InterPro" id="IPR001789">
    <property type="entry name" value="Sig_transdc_resp-reg_receiver"/>
</dbReference>
<dbReference type="PANTHER" id="PTHR45339">
    <property type="entry name" value="HYBRID SIGNAL TRANSDUCTION HISTIDINE KINASE J"/>
    <property type="match status" value="1"/>
</dbReference>
<dbReference type="PANTHER" id="PTHR45339:SF1">
    <property type="entry name" value="HYBRID SIGNAL TRANSDUCTION HISTIDINE KINASE J"/>
    <property type="match status" value="1"/>
</dbReference>
<dbReference type="Pfam" id="PF00072">
    <property type="entry name" value="Response_reg"/>
    <property type="match status" value="1"/>
</dbReference>
<dbReference type="SMART" id="SM00448">
    <property type="entry name" value="REC"/>
    <property type="match status" value="1"/>
</dbReference>
<dbReference type="SUPFAM" id="SSF52172">
    <property type="entry name" value="CheY-like"/>
    <property type="match status" value="1"/>
</dbReference>
<dbReference type="PROSITE" id="PS50110">
    <property type="entry name" value="RESPONSE_REGULATORY"/>
    <property type="match status" value="1"/>
</dbReference>
<keyword id="KW-0963">Cytoplasm</keyword>
<keyword id="KW-0597">Phosphoprotein</keyword>
<keyword id="KW-1185">Reference proteome</keyword>
<keyword id="KW-0346">Stress response</keyword>
<keyword id="KW-0902">Two-component regulatory system</keyword>
<keyword id="KW-0843">Virulence</keyword>
<reference key="1">
    <citation type="journal article" date="2005" name="Nature">
        <title>Genomic sequence of the pathogenic and allergenic filamentous fungus Aspergillus fumigatus.</title>
        <authorList>
            <person name="Nierman W.C."/>
            <person name="Pain A."/>
            <person name="Anderson M.J."/>
            <person name="Wortman J.R."/>
            <person name="Kim H.S."/>
            <person name="Arroyo J."/>
            <person name="Berriman M."/>
            <person name="Abe K."/>
            <person name="Archer D.B."/>
            <person name="Bermejo C."/>
            <person name="Bennett J.W."/>
            <person name="Bowyer P."/>
            <person name="Chen D."/>
            <person name="Collins M."/>
            <person name="Coulsen R."/>
            <person name="Davies R."/>
            <person name="Dyer P.S."/>
            <person name="Farman M.L."/>
            <person name="Fedorova N."/>
            <person name="Fedorova N.D."/>
            <person name="Feldblyum T.V."/>
            <person name="Fischer R."/>
            <person name="Fosker N."/>
            <person name="Fraser A."/>
            <person name="Garcia J.L."/>
            <person name="Garcia M.J."/>
            <person name="Goble A."/>
            <person name="Goldman G.H."/>
            <person name="Gomi K."/>
            <person name="Griffith-Jones S."/>
            <person name="Gwilliam R."/>
            <person name="Haas B.J."/>
            <person name="Haas H."/>
            <person name="Harris D.E."/>
            <person name="Horiuchi H."/>
            <person name="Huang J."/>
            <person name="Humphray S."/>
            <person name="Jimenez J."/>
            <person name="Keller N."/>
            <person name="Khouri H."/>
            <person name="Kitamoto K."/>
            <person name="Kobayashi T."/>
            <person name="Konzack S."/>
            <person name="Kulkarni R."/>
            <person name="Kumagai T."/>
            <person name="Lafton A."/>
            <person name="Latge J.-P."/>
            <person name="Li W."/>
            <person name="Lord A."/>
            <person name="Lu C."/>
            <person name="Majoros W.H."/>
            <person name="May G.S."/>
            <person name="Miller B.L."/>
            <person name="Mohamoud Y."/>
            <person name="Molina M."/>
            <person name="Monod M."/>
            <person name="Mouyna I."/>
            <person name="Mulligan S."/>
            <person name="Murphy L.D."/>
            <person name="O'Neil S."/>
            <person name="Paulsen I."/>
            <person name="Penalva M.A."/>
            <person name="Pertea M."/>
            <person name="Price C."/>
            <person name="Pritchard B.L."/>
            <person name="Quail M.A."/>
            <person name="Rabbinowitsch E."/>
            <person name="Rawlins N."/>
            <person name="Rajandream M.A."/>
            <person name="Reichard U."/>
            <person name="Renauld H."/>
            <person name="Robson G.D."/>
            <person name="Rodriguez de Cordoba S."/>
            <person name="Rodriguez-Pena J.M."/>
            <person name="Ronning C.M."/>
            <person name="Rutter S."/>
            <person name="Salzberg S.L."/>
            <person name="Sanchez M."/>
            <person name="Sanchez-Ferrero J.C."/>
            <person name="Saunders D."/>
            <person name="Seeger K."/>
            <person name="Squares R."/>
            <person name="Squares S."/>
            <person name="Takeuchi M."/>
            <person name="Tekaia F."/>
            <person name="Turner G."/>
            <person name="Vazquez de Aldana C.R."/>
            <person name="Weidman J."/>
            <person name="White O."/>
            <person name="Woodward J.R."/>
            <person name="Yu J.-H."/>
            <person name="Fraser C.M."/>
            <person name="Galagan J.E."/>
            <person name="Asai K."/>
            <person name="Machida M."/>
            <person name="Hall N."/>
            <person name="Barrell B.G."/>
            <person name="Denning D.W."/>
        </authorList>
    </citation>
    <scope>NUCLEOTIDE SEQUENCE [LARGE SCALE GENOMIC DNA]</scope>
    <source>
        <strain>ATCC MYA-4609 / CBS 101355 / FGSC A1100 / Af293</strain>
    </source>
</reference>
<reference key="2">
    <citation type="journal article" date="2014" name="Fungal Genet. Biol.">
        <title>The role of AtfA and HOG MAPK pathway in stress tolerance in conidia of Aspergillus fumigatus.</title>
        <authorList>
            <person name="Hagiwara D."/>
            <person name="Suzuki S."/>
            <person name="Kamei K."/>
            <person name="Gonoi T."/>
            <person name="Kawamoto S."/>
        </authorList>
    </citation>
    <scope>FUNCTION</scope>
    <scope>DISRUPTION PHENOTYPE</scope>
</reference>
<reference key="3">
    <citation type="journal article" date="2021" name="MSphere">
        <title>Host lung environment limits Aspergillus fumigatus germination through an SskA-dependent signaling response.</title>
        <authorList>
            <person name="Kirkland M.E."/>
            <person name="Stannard M."/>
            <person name="Kowalski C.H."/>
            <person name="Mould D."/>
            <person name="Caffrey-Carr A."/>
            <person name="Temple R.M."/>
            <person name="Ross B.S."/>
            <person name="Lofgren L.A."/>
            <person name="Stajich J.E."/>
            <person name="Cramer R.A."/>
            <person name="Obar J.J."/>
        </authorList>
    </citation>
    <scope>FUNCTION</scope>
    <scope>DISRUPTION PHENOTYPE</scope>
</reference>
<comment type="function">
    <text evidence="4 5">Final receptor of the osmolarity two-component system regulatory system, which controls activity of the sakA mitogen-activated protein kinase (MAPK) pathway in response to changes in the osmolarity of the extracellular environment (PubMed:25459537, PubMed:34878292). Regulates the germination in the airways that drives enhanced disease initiation and inflammation in the lungs (PubMed:25459537, PubMed:34878292).</text>
</comment>
<comment type="subcellular location">
    <subcellularLocation>
        <location evidence="1">Cytoplasm</location>
    </subcellularLocation>
</comment>
<comment type="disruption phenotype">
    <text evidence="4 5">Leads to increased germination that induces more inflammation in host lungs (PubMed:34878292). Decreased ability to induce the sakA-dependent stress pathway (PubMed:34878292). Leads to sensitivity to oxidative stress and heat stress (PubMed:25459537).</text>
</comment>
<comment type="similarity">
    <text evidence="7">Belongs to the SSK1 family.</text>
</comment>
<name>SSKA_ASPFU</name>
<sequence length="850" mass="90628">MPDRRLSQLLKSKLLRRSSTTATTSPKQNQKPVNAQKKAAVGADPLVDPNSTSDLSCSLPPHLLTSNEGEGDAKSRAYSIISSIPLDHPSSPDEIPGPATGSSAGCEQYFTHFDRSGANSRQEGSQNGSIQQSPTFTRTLRHKQLTEEKDKGKLQSREGDQRGEYGYQRIRNDSNDSDPQYSLTTELANKPSTPQTPAGDDSLHSPSATPLPLSPSLPGPTGASSLQAAYRPVRENSSVPLVESQLTPSLGAVAEDSSGESAFHFVGPSSSSPFPKRPPLGFRRQSLLPASHQHLISGLLGFGPSQNLGQGSGHPSTVNADMIPRKVWVKRPGGSATLVPTMEDSLVDELRDQVIMKYANSLGRTFDSPDIMIRISPREGSNRQSTPERILSPEEPLGVVLDTYFPGGQTVDEALVIDIPQRRTPKPSPRHPVYYHHSEPGEHGEYFPLMPANPNAPTPPTHPSASSTSVNAHHTGPSISILTTDSNMASCPQPPVAAPQVPTPPGPPPESPQTKTHTPPARVASPRPRPTKPKKAGNGQSPNAAFGGLIEGTVPPINVLIVEDNIINQKLLEAFMKRLSVRWKCAANGEEAVRKWREGGFHLVLMDIQLPVMNGLDATKEIRRLERLNGIGVFTKTASGRSSASSLSPEVNQASSEVSLSEEDTLHDLSLFKSPVIIVALTASSLQSDRHEALAAGCNDFLTKPVGFPWLEQKVTEWGCMQALIDFEGWRKWRGFADEPQSSSPTDGGFTSPLQAGANGVSSRTSTSPSSAAVNATARAFATGPGAGKRKSTVPELTKPVDILPEEPPGSGSGEGNETLDSPASPLTSVHVGDPTEPPGDEEQQALDAT</sequence>
<feature type="chain" id="PRO_0000460448" description="Response regulator sskA">
    <location>
        <begin position="1"/>
        <end position="850"/>
    </location>
</feature>
<feature type="domain" description="Response regulatory" evidence="2">
    <location>
        <begin position="558"/>
        <end position="719"/>
    </location>
</feature>
<feature type="region of interest" description="Disordered" evidence="3">
    <location>
        <begin position="1"/>
        <end position="225"/>
    </location>
</feature>
<feature type="region of interest" description="Disordered" evidence="3">
    <location>
        <begin position="419"/>
        <end position="542"/>
    </location>
</feature>
<feature type="region of interest" description="Disordered" evidence="3">
    <location>
        <begin position="736"/>
        <end position="850"/>
    </location>
</feature>
<feature type="compositionally biased region" description="Low complexity" evidence="3">
    <location>
        <begin position="7"/>
        <end position="25"/>
    </location>
</feature>
<feature type="compositionally biased region" description="Polar residues" evidence="3">
    <location>
        <begin position="117"/>
        <end position="138"/>
    </location>
</feature>
<feature type="compositionally biased region" description="Basic and acidic residues" evidence="3">
    <location>
        <begin position="144"/>
        <end position="163"/>
    </location>
</feature>
<feature type="compositionally biased region" description="Polar residues" evidence="3">
    <location>
        <begin position="177"/>
        <end position="196"/>
    </location>
</feature>
<feature type="compositionally biased region" description="Basic and acidic residues" evidence="3">
    <location>
        <begin position="436"/>
        <end position="445"/>
    </location>
</feature>
<feature type="compositionally biased region" description="Polar residues" evidence="3">
    <location>
        <begin position="477"/>
        <end position="490"/>
    </location>
</feature>
<feature type="compositionally biased region" description="Pro residues" evidence="3">
    <location>
        <begin position="492"/>
        <end position="511"/>
    </location>
</feature>
<feature type="compositionally biased region" description="Low complexity" evidence="3">
    <location>
        <begin position="762"/>
        <end position="782"/>
    </location>
</feature>
<feature type="compositionally biased region" description="Polar residues" evidence="3">
    <location>
        <begin position="819"/>
        <end position="828"/>
    </location>
</feature>
<feature type="compositionally biased region" description="Acidic residues" evidence="3">
    <location>
        <begin position="839"/>
        <end position="850"/>
    </location>
</feature>
<feature type="modified residue" description="4-aspartylphosphate" evidence="2">
    <location>
        <position position="607"/>
    </location>
</feature>
<evidence type="ECO:0000250" key="1">
    <source>
        <dbReference type="UniProtKB" id="Q07084"/>
    </source>
</evidence>
<evidence type="ECO:0000255" key="2">
    <source>
        <dbReference type="PROSITE-ProRule" id="PRU00169"/>
    </source>
</evidence>
<evidence type="ECO:0000256" key="3">
    <source>
        <dbReference type="SAM" id="MobiDB-lite"/>
    </source>
</evidence>
<evidence type="ECO:0000269" key="4">
    <source>
    </source>
</evidence>
<evidence type="ECO:0000269" key="5">
    <source>
    </source>
</evidence>
<evidence type="ECO:0000303" key="6">
    <source>
    </source>
</evidence>
<evidence type="ECO:0000305" key="7"/>
<evidence type="ECO:0000312" key="8">
    <source>
        <dbReference type="EMBL" id="EAL91759.1"/>
    </source>
</evidence>
<proteinExistence type="inferred from homology"/>
<gene>
    <name evidence="6" type="primary">sska</name>
    <name evidence="8" type="ORF">AFUA_5G08390</name>
</gene>
<protein>
    <recommendedName>
        <fullName evidence="6">Response regulator sskA</fullName>
    </recommendedName>
</protein>
<organism>
    <name type="scientific">Aspergillus fumigatus (strain ATCC MYA-4609 / CBS 101355 / FGSC A1100 / Af293)</name>
    <name type="common">Neosartorya fumigata</name>
    <dbReference type="NCBI Taxonomy" id="330879"/>
    <lineage>
        <taxon>Eukaryota</taxon>
        <taxon>Fungi</taxon>
        <taxon>Dikarya</taxon>
        <taxon>Ascomycota</taxon>
        <taxon>Pezizomycotina</taxon>
        <taxon>Eurotiomycetes</taxon>
        <taxon>Eurotiomycetidae</taxon>
        <taxon>Eurotiales</taxon>
        <taxon>Aspergillaceae</taxon>
        <taxon>Aspergillus</taxon>
        <taxon>Aspergillus subgen. Fumigati</taxon>
    </lineage>
</organism>